<sequence>MQQYLKILTDVILLGEPRNDRTGTGTVSIFDSYAKFDLREGFPAVTTKRLAWKSVVGELLWFLSGSTNLHDLRVFTFGRDEGQWTIWTPNYEDQAISMGYDKGNLGPVYGKQWRNFGGRDQILELIEGLKNNPHGRRHLVSAWNVAELDKMALPPCHYGFQCYVSNDGYLDLKWTQRSVDCFLGLPFNIASYALLTHILAKLTGLKPRYLIFSGGDTHIYNDHMEQVEEQVKRKPRPLPTLVMPEFVDLYDLLENNTAAWSFHLEGYDPHPALKAKMSS</sequence>
<evidence type="ECO:0000250" key="1">
    <source>
        <dbReference type="UniProtKB" id="P0A884"/>
    </source>
</evidence>
<evidence type="ECO:0000269" key="2">
    <source>
    </source>
</evidence>
<evidence type="ECO:0000303" key="3">
    <source>
    </source>
</evidence>
<evidence type="ECO:0000305" key="4"/>
<evidence type="ECO:0000305" key="5">
    <source>
    </source>
</evidence>
<evidence type="ECO:0000312" key="6">
    <source>
        <dbReference type="EMBL" id="AAS77138.1"/>
    </source>
</evidence>
<evidence type="ECO:0000312" key="7">
    <source>
        <dbReference type="EMBL" id="AAU05229.1"/>
    </source>
</evidence>
<evidence type="ECO:0000312" key="8">
    <source>
        <dbReference type="EMBL" id="AAX12024.1"/>
    </source>
</evidence>
<dbReference type="EC" id="2.1.1.45" evidence="2"/>
<dbReference type="EMBL" id="AY543070">
    <property type="protein sequence ID" value="AAS77138.1"/>
    <property type="molecule type" value="Genomic_DNA"/>
</dbReference>
<dbReference type="EMBL" id="AY692264">
    <property type="protein sequence ID" value="AAU05229.1"/>
    <property type="molecule type" value="Genomic_DNA"/>
</dbReference>
<dbReference type="EMBL" id="AY587007">
    <property type="protein sequence ID" value="AAX12024.1"/>
    <property type="molecule type" value="Genomic_DNA"/>
</dbReference>
<dbReference type="RefSeq" id="YP_006920.1">
    <property type="nucleotide sequence ID" value="NC_005859.1"/>
</dbReference>
<dbReference type="SMR" id="Q6QGJ5"/>
<dbReference type="GeneID" id="2777594"/>
<dbReference type="KEGG" id="vg:2777594"/>
<dbReference type="Proteomes" id="UP000002107">
    <property type="component" value="Genome"/>
</dbReference>
<dbReference type="Proteomes" id="UP000002141">
    <property type="component" value="Segment"/>
</dbReference>
<dbReference type="Proteomes" id="UP000002503">
    <property type="component" value="Segment"/>
</dbReference>
<dbReference type="GO" id="GO:0004799">
    <property type="term" value="F:thymidylate synthase activity"/>
    <property type="evidence" value="ECO:0000314"/>
    <property type="project" value="UniProtKB"/>
</dbReference>
<dbReference type="GO" id="GO:0006260">
    <property type="term" value="P:DNA replication"/>
    <property type="evidence" value="ECO:0007669"/>
    <property type="project" value="UniProtKB-KW"/>
</dbReference>
<dbReference type="GO" id="GO:0006231">
    <property type="term" value="P:dTMP biosynthetic process"/>
    <property type="evidence" value="ECO:0007669"/>
    <property type="project" value="InterPro"/>
</dbReference>
<dbReference type="GO" id="GO:0032259">
    <property type="term" value="P:methylation"/>
    <property type="evidence" value="ECO:0007669"/>
    <property type="project" value="UniProtKB-KW"/>
</dbReference>
<dbReference type="GO" id="GO:0039693">
    <property type="term" value="P:viral DNA genome replication"/>
    <property type="evidence" value="ECO:0007669"/>
    <property type="project" value="UniProtKB-KW"/>
</dbReference>
<dbReference type="CDD" id="cd00351">
    <property type="entry name" value="TS_Pyrimidine_HMase"/>
    <property type="match status" value="1"/>
</dbReference>
<dbReference type="FunFam" id="3.30.572.10:FF:000009">
    <property type="entry name" value="Thymidylate synthase"/>
    <property type="match status" value="1"/>
</dbReference>
<dbReference type="Gene3D" id="3.30.572.10">
    <property type="entry name" value="Thymidylate synthase/dCMP hydroxymethylase domain"/>
    <property type="match status" value="1"/>
</dbReference>
<dbReference type="HAMAP" id="MF_00008">
    <property type="entry name" value="Thymidy_synth_bact"/>
    <property type="match status" value="1"/>
</dbReference>
<dbReference type="InterPro" id="IPR045097">
    <property type="entry name" value="Thymidate_synth/dCMP_Mease"/>
</dbReference>
<dbReference type="InterPro" id="IPR023451">
    <property type="entry name" value="Thymidate_synth/dCMP_Mease_dom"/>
</dbReference>
<dbReference type="InterPro" id="IPR036926">
    <property type="entry name" value="Thymidate_synth/dCMP_Mease_sf"/>
</dbReference>
<dbReference type="InterPro" id="IPR000398">
    <property type="entry name" value="Thymidylate_synthase"/>
</dbReference>
<dbReference type="NCBIfam" id="TIGR03284">
    <property type="entry name" value="thym_sym"/>
    <property type="match status" value="1"/>
</dbReference>
<dbReference type="PANTHER" id="PTHR11548:SF9">
    <property type="entry name" value="THYMIDYLATE SYNTHASE"/>
    <property type="match status" value="1"/>
</dbReference>
<dbReference type="PANTHER" id="PTHR11548">
    <property type="entry name" value="THYMIDYLATE SYNTHASE 1"/>
    <property type="match status" value="1"/>
</dbReference>
<dbReference type="Pfam" id="PF00303">
    <property type="entry name" value="Thymidylat_synt"/>
    <property type="match status" value="1"/>
</dbReference>
<dbReference type="PRINTS" id="PR00108">
    <property type="entry name" value="THYMDSNTHASE"/>
</dbReference>
<dbReference type="SUPFAM" id="SSF55831">
    <property type="entry name" value="Thymidylate synthase/dCMP hydroxymethylase"/>
    <property type="match status" value="1"/>
</dbReference>
<name>THY_BPT5</name>
<gene>
    <name evidence="6" type="primary">thy</name>
    <name evidence="7" type="synonym">thyA</name>
    <name evidence="6" type="ORF">T5.092</name>
    <name evidence="7" type="ORF">T5p090</name>
</gene>
<reference key="1">
    <citation type="submission" date="2004-01" db="EMBL/GenBank/DDBJ databases">
        <title>Bacteriophage T5 complete genome.</title>
        <authorList>
            <person name="Ksenzenko V.N."/>
            <person name="Kaliman A.V."/>
            <person name="Krutilina A.I."/>
            <person name="Shlyapnikov M.G."/>
        </authorList>
    </citation>
    <scope>NUCLEOTIDE SEQUENCE [LARGE SCALE GENOMIC DNA]</scope>
</reference>
<reference key="2">
    <citation type="journal article" date="2005" name="Virology">
        <title>Complete genome sequence of bacteriophage T5.</title>
        <authorList>
            <person name="Wang J."/>
            <person name="Jiang Y."/>
            <person name="Vincent M."/>
            <person name="Sun Y."/>
            <person name="Yu H."/>
            <person name="Wang J."/>
            <person name="Bao Q."/>
            <person name="Kong H."/>
            <person name="Hu S."/>
        </authorList>
    </citation>
    <scope>NUCLEOTIDE SEQUENCE [LARGE SCALE GENOMIC DNA]</scope>
    <scope>INDUCTION</scope>
    <source>
        <strain evidence="8">ATCC 11303-B5</strain>
    </source>
</reference>
<reference key="3">
    <citation type="journal article" date="2014" name="J. Virol.">
        <title>Insights into bacteriophage T5 structure from analysis of its morphogenesis genes and protein components.</title>
        <authorList>
            <person name="Zivanovic Y."/>
            <person name="Confalonieri F."/>
            <person name="Ponchon L."/>
            <person name="Lurz R."/>
            <person name="Chami M."/>
            <person name="Flayhan A."/>
            <person name="Renouard M."/>
            <person name="Huet A."/>
            <person name="Decottignies P."/>
            <person name="Davidson A.R."/>
            <person name="Breyton C."/>
            <person name="Boulanger P."/>
        </authorList>
    </citation>
    <scope>NUCLEOTIDE SEQUENCE [LARGE SCALE GENOMIC DNA]</scope>
    <source>
        <strain>St0 deletion mutant</strain>
    </source>
</reference>
<reference key="4">
    <citation type="journal article" date="1985" name="J. Virol.">
        <title>Isolation and partial characterization of a bacteriophage T5 mutant unable to induce thymidylate synthetase and its use in studying the effect of uracil incorporation into DNA on early gene expression.</title>
        <authorList>
            <person name="Swart W.J. Jr."/>
            <person name="Warner H.R."/>
        </authorList>
    </citation>
    <scope>FUNCTION</scope>
    <scope>CATALYTIC ACTIVITY</scope>
</reference>
<keyword id="KW-0235">DNA replication</keyword>
<keyword id="KW-0244">Early protein</keyword>
<keyword id="KW-0489">Methyltransferase</keyword>
<keyword id="KW-1185">Reference proteome</keyword>
<keyword id="KW-0808">Transferase</keyword>
<keyword id="KW-1194">Viral DNA replication</keyword>
<feature type="chain" id="PRO_0000435562" description="Probable thymidylate synthase">
    <location>
        <begin position="1"/>
        <end position="279"/>
    </location>
</feature>
<feature type="active site" description="Nucleophile" evidence="1">
    <location>
        <position position="156"/>
    </location>
</feature>
<feature type="binding site" description="in other chain" evidence="1">
    <location>
        <position position="21"/>
    </location>
    <ligand>
        <name>dUMP</name>
        <dbReference type="ChEBI" id="CHEBI:246422"/>
        <note>ligand shared between dimeric partners</note>
    </ligand>
</feature>
<feature type="binding site" evidence="1">
    <location>
        <begin position="136"/>
        <end position="137"/>
    </location>
    <ligand>
        <name>dUMP</name>
        <dbReference type="ChEBI" id="CHEBI:246422"/>
        <note>ligand shared between dimeric partners</note>
    </ligand>
</feature>
<feature type="binding site" description="in other chain" evidence="1">
    <location>
        <begin position="177"/>
        <end position="180"/>
    </location>
    <ligand>
        <name>dUMP</name>
        <dbReference type="ChEBI" id="CHEBI:246422"/>
        <note>ligand shared between dimeric partners</note>
    </ligand>
</feature>
<feature type="binding site" evidence="1">
    <location>
        <position position="180"/>
    </location>
    <ligand>
        <name>(6R)-5,10-methylene-5,6,7,8-tetrahydrofolate</name>
        <dbReference type="ChEBI" id="CHEBI:15636"/>
    </ligand>
</feature>
<feature type="binding site" description="in other chain" evidence="1">
    <location>
        <position position="188"/>
    </location>
    <ligand>
        <name>dUMP</name>
        <dbReference type="ChEBI" id="CHEBI:246422"/>
        <note>ligand shared between dimeric partners</note>
    </ligand>
</feature>
<feature type="binding site" description="in other chain" evidence="1">
    <location>
        <begin position="218"/>
        <end position="220"/>
    </location>
    <ligand>
        <name>dUMP</name>
        <dbReference type="ChEBI" id="CHEBI:246422"/>
        <note>ligand shared between dimeric partners</note>
    </ligand>
</feature>
<organismHost>
    <name type="scientific">Escherichia coli</name>
    <dbReference type="NCBI Taxonomy" id="562"/>
</organismHost>
<proteinExistence type="evidence at protein level"/>
<protein>
    <recommendedName>
        <fullName evidence="3">Probable thymidylate synthase</fullName>
        <ecNumber evidence="2">2.1.1.45</ecNumber>
    </recommendedName>
</protein>
<organism>
    <name type="scientific">Escherichia phage T5</name>
    <name type="common">Enterobacteria phage T5</name>
    <dbReference type="NCBI Taxonomy" id="2695836"/>
    <lineage>
        <taxon>Viruses</taxon>
        <taxon>Duplodnaviria</taxon>
        <taxon>Heunggongvirae</taxon>
        <taxon>Uroviricota</taxon>
        <taxon>Caudoviricetes</taxon>
        <taxon>Demerecviridae</taxon>
        <taxon>Markadamsvirinae</taxon>
        <taxon>Tequintavirus</taxon>
        <taxon>Tequintavirus T5</taxon>
    </lineage>
</organism>
<comment type="function">
    <text evidence="2">Sythesizes the thymine necessary for the viral DNA replication.</text>
</comment>
<comment type="catalytic activity">
    <reaction evidence="2">
        <text>dUMP + (6R)-5,10-methylene-5,6,7,8-tetrahydrofolate = 7,8-dihydrofolate + dTMP</text>
        <dbReference type="Rhea" id="RHEA:12104"/>
        <dbReference type="ChEBI" id="CHEBI:15636"/>
        <dbReference type="ChEBI" id="CHEBI:57451"/>
        <dbReference type="ChEBI" id="CHEBI:63528"/>
        <dbReference type="ChEBI" id="CHEBI:246422"/>
        <dbReference type="EC" id="2.1.1.45"/>
    </reaction>
</comment>
<comment type="induction">
    <text evidence="5">Expressed in the early phase of the viral replicative cycle.</text>
</comment>
<comment type="similarity">
    <text evidence="4">Belongs to the thymidylate synthase family.</text>
</comment>
<accession>Q6QGJ5</accession>